<reference key="1">
    <citation type="submission" date="2007-06" db="EMBL/GenBank/DDBJ databases">
        <authorList>
            <person name="Dodson R.J."/>
            <person name="Harkins D."/>
            <person name="Paulsen I.T."/>
        </authorList>
    </citation>
    <scope>NUCLEOTIDE SEQUENCE [LARGE SCALE GENOMIC DNA]</scope>
    <source>
        <strain>DSM 24068 / PA7</strain>
    </source>
</reference>
<gene>
    <name evidence="1" type="primary">ttcA</name>
    <name type="ordered locus">PSPA7_4186</name>
</gene>
<proteinExistence type="inferred from homology"/>
<dbReference type="EC" id="2.8.1.-" evidence="1"/>
<dbReference type="EMBL" id="CP000744">
    <property type="protein sequence ID" value="ABR84597.1"/>
    <property type="molecule type" value="Genomic_DNA"/>
</dbReference>
<dbReference type="RefSeq" id="WP_003156921.1">
    <property type="nucleotide sequence ID" value="NC_009656.1"/>
</dbReference>
<dbReference type="SMR" id="A6V906"/>
<dbReference type="KEGG" id="pap:PSPA7_4186"/>
<dbReference type="HOGENOM" id="CLU_026481_0_0_6"/>
<dbReference type="Proteomes" id="UP000001582">
    <property type="component" value="Chromosome"/>
</dbReference>
<dbReference type="GO" id="GO:0005737">
    <property type="term" value="C:cytoplasm"/>
    <property type="evidence" value="ECO:0007669"/>
    <property type="project" value="UniProtKB-SubCell"/>
</dbReference>
<dbReference type="GO" id="GO:0051539">
    <property type="term" value="F:4 iron, 4 sulfur cluster binding"/>
    <property type="evidence" value="ECO:0007669"/>
    <property type="project" value="UniProtKB-UniRule"/>
</dbReference>
<dbReference type="GO" id="GO:0005524">
    <property type="term" value="F:ATP binding"/>
    <property type="evidence" value="ECO:0007669"/>
    <property type="project" value="UniProtKB-UniRule"/>
</dbReference>
<dbReference type="GO" id="GO:0000287">
    <property type="term" value="F:magnesium ion binding"/>
    <property type="evidence" value="ECO:0007669"/>
    <property type="project" value="UniProtKB-UniRule"/>
</dbReference>
<dbReference type="GO" id="GO:0016783">
    <property type="term" value="F:sulfurtransferase activity"/>
    <property type="evidence" value="ECO:0007669"/>
    <property type="project" value="UniProtKB-UniRule"/>
</dbReference>
<dbReference type="GO" id="GO:0000049">
    <property type="term" value="F:tRNA binding"/>
    <property type="evidence" value="ECO:0007669"/>
    <property type="project" value="UniProtKB-KW"/>
</dbReference>
<dbReference type="GO" id="GO:0034227">
    <property type="term" value="P:tRNA thio-modification"/>
    <property type="evidence" value="ECO:0007669"/>
    <property type="project" value="UniProtKB-UniRule"/>
</dbReference>
<dbReference type="CDD" id="cd24138">
    <property type="entry name" value="TtcA-like"/>
    <property type="match status" value="1"/>
</dbReference>
<dbReference type="Gene3D" id="3.40.50.620">
    <property type="entry name" value="HUPs"/>
    <property type="match status" value="1"/>
</dbReference>
<dbReference type="HAMAP" id="MF_01850">
    <property type="entry name" value="TtcA"/>
    <property type="match status" value="1"/>
</dbReference>
<dbReference type="InterPro" id="IPR014729">
    <property type="entry name" value="Rossmann-like_a/b/a_fold"/>
</dbReference>
<dbReference type="InterPro" id="IPR011063">
    <property type="entry name" value="TilS/TtcA_N"/>
</dbReference>
<dbReference type="InterPro" id="IPR012089">
    <property type="entry name" value="tRNA_Cyd_32_2_STrfase"/>
</dbReference>
<dbReference type="InterPro" id="IPR035107">
    <property type="entry name" value="tRNA_thiolation_TtcA_Ctu1"/>
</dbReference>
<dbReference type="NCBIfam" id="NF007972">
    <property type="entry name" value="PRK10696.1"/>
    <property type="match status" value="1"/>
</dbReference>
<dbReference type="PANTHER" id="PTHR43686:SF1">
    <property type="entry name" value="AMINOTRAN_5 DOMAIN-CONTAINING PROTEIN"/>
    <property type="match status" value="1"/>
</dbReference>
<dbReference type="PANTHER" id="PTHR43686">
    <property type="entry name" value="SULFURTRANSFERASE-RELATED"/>
    <property type="match status" value="1"/>
</dbReference>
<dbReference type="Pfam" id="PF01171">
    <property type="entry name" value="ATP_bind_3"/>
    <property type="match status" value="1"/>
</dbReference>
<dbReference type="PIRSF" id="PIRSF004976">
    <property type="entry name" value="ATPase_YdaO"/>
    <property type="match status" value="1"/>
</dbReference>
<dbReference type="SUPFAM" id="SSF52402">
    <property type="entry name" value="Adenine nucleotide alpha hydrolases-like"/>
    <property type="match status" value="1"/>
</dbReference>
<keyword id="KW-0004">4Fe-4S</keyword>
<keyword id="KW-0067">ATP-binding</keyword>
<keyword id="KW-0963">Cytoplasm</keyword>
<keyword id="KW-0408">Iron</keyword>
<keyword id="KW-0411">Iron-sulfur</keyword>
<keyword id="KW-0460">Magnesium</keyword>
<keyword id="KW-0479">Metal-binding</keyword>
<keyword id="KW-0547">Nucleotide-binding</keyword>
<keyword id="KW-0694">RNA-binding</keyword>
<keyword id="KW-0808">Transferase</keyword>
<keyword id="KW-0819">tRNA processing</keyword>
<keyword id="KW-0820">tRNA-binding</keyword>
<protein>
    <recommendedName>
        <fullName evidence="1">tRNA-cytidine(32) 2-sulfurtransferase</fullName>
        <ecNumber evidence="1">2.8.1.-</ecNumber>
    </recommendedName>
    <alternativeName>
        <fullName evidence="1">Two-thiocytidine biosynthesis protein A</fullName>
    </alternativeName>
    <alternativeName>
        <fullName evidence="1">tRNA 2-thiocytidine biosynthesis protein TtcA</fullName>
    </alternativeName>
</protein>
<accession>A6V906</accession>
<organism>
    <name type="scientific">Pseudomonas paraeruginosa (strain DSM 24068 / PA7)</name>
    <name type="common">Pseudomonas aeruginosa (strain PA7)</name>
    <dbReference type="NCBI Taxonomy" id="381754"/>
    <lineage>
        <taxon>Bacteria</taxon>
        <taxon>Pseudomonadati</taxon>
        <taxon>Pseudomonadota</taxon>
        <taxon>Gammaproteobacteria</taxon>
        <taxon>Pseudomonadales</taxon>
        <taxon>Pseudomonadaceae</taxon>
        <taxon>Pseudomonas</taxon>
        <taxon>Pseudomonas paraeruginosa</taxon>
    </lineage>
</organism>
<feature type="chain" id="PRO_0000348792" description="tRNA-cytidine(32) 2-sulfurtransferase">
    <location>
        <begin position="1"/>
        <end position="274"/>
    </location>
</feature>
<feature type="short sequence motif" description="PP-loop motif" evidence="1">
    <location>
        <begin position="40"/>
        <end position="45"/>
    </location>
</feature>
<feature type="binding site" evidence="1">
    <location>
        <position position="115"/>
    </location>
    <ligand>
        <name>[4Fe-4S] cluster</name>
        <dbReference type="ChEBI" id="CHEBI:49883"/>
    </ligand>
</feature>
<feature type="binding site" evidence="1">
    <location>
        <position position="118"/>
    </location>
    <ligand>
        <name>[4Fe-4S] cluster</name>
        <dbReference type="ChEBI" id="CHEBI:49883"/>
    </ligand>
</feature>
<feature type="binding site" evidence="1">
    <location>
        <position position="206"/>
    </location>
    <ligand>
        <name>[4Fe-4S] cluster</name>
        <dbReference type="ChEBI" id="CHEBI:49883"/>
    </ligand>
</feature>
<name>TTCA_PSEP7</name>
<sequence length="274" mass="31206">MGTLSVNQNKLQKRLRRLAGEAITDFNMIEDGDKVMVCLSGGKDSYTMLDILLYLQKVAPIRFEIVAVNMDQKQPGFPEHVLPEYLKSIGVEYHIVEKDTYSVVKEKIPEGKTTCSLCSRLRRGTLYTFADEIGATKMALGHHRDDILETFFLNMFYGGTLKAMPPKLLADDGRNVVIRPLAYCSEKDIEAYSQLKEFPIIPCNLCGSQENLQRQVVKEMLLEWERKSPGRTEIMFRALQNVVPSQLADRNLFDFASLRIDESATPRFLDVMNL</sequence>
<evidence type="ECO:0000255" key="1">
    <source>
        <dbReference type="HAMAP-Rule" id="MF_01850"/>
    </source>
</evidence>
<comment type="function">
    <text evidence="1">Catalyzes the ATP-dependent 2-thiolation of cytidine in position 32 of tRNA, to form 2-thiocytidine (s(2)C32). The sulfur atoms are provided by the cysteine/cysteine desulfurase (IscS) system.</text>
</comment>
<comment type="catalytic activity">
    <reaction evidence="1">
        <text>cytidine(32) in tRNA + S-sulfanyl-L-cysteinyl-[cysteine desulfurase] + AH2 + ATP = 2-thiocytidine(32) in tRNA + L-cysteinyl-[cysteine desulfurase] + A + AMP + diphosphate + H(+)</text>
        <dbReference type="Rhea" id="RHEA:57048"/>
        <dbReference type="Rhea" id="RHEA-COMP:10288"/>
        <dbReference type="Rhea" id="RHEA-COMP:12157"/>
        <dbReference type="Rhea" id="RHEA-COMP:12158"/>
        <dbReference type="Rhea" id="RHEA-COMP:14821"/>
        <dbReference type="ChEBI" id="CHEBI:13193"/>
        <dbReference type="ChEBI" id="CHEBI:15378"/>
        <dbReference type="ChEBI" id="CHEBI:17499"/>
        <dbReference type="ChEBI" id="CHEBI:29950"/>
        <dbReference type="ChEBI" id="CHEBI:30616"/>
        <dbReference type="ChEBI" id="CHEBI:33019"/>
        <dbReference type="ChEBI" id="CHEBI:61963"/>
        <dbReference type="ChEBI" id="CHEBI:82748"/>
        <dbReference type="ChEBI" id="CHEBI:141453"/>
        <dbReference type="ChEBI" id="CHEBI:456215"/>
    </reaction>
    <physiologicalReaction direction="left-to-right" evidence="1">
        <dbReference type="Rhea" id="RHEA:57049"/>
    </physiologicalReaction>
</comment>
<comment type="cofactor">
    <cofactor evidence="1">
        <name>Mg(2+)</name>
        <dbReference type="ChEBI" id="CHEBI:18420"/>
    </cofactor>
</comment>
<comment type="cofactor">
    <cofactor evidence="1">
        <name>[4Fe-4S] cluster</name>
        <dbReference type="ChEBI" id="CHEBI:49883"/>
    </cofactor>
    <text evidence="1">Binds 1 [4Fe-4S] cluster per subunit. The cluster is chelated by three Cys residues, the fourth Fe has a free coordination site that may bind a sulfur atom transferred from the persulfide of IscS.</text>
</comment>
<comment type="pathway">
    <text evidence="1">tRNA modification.</text>
</comment>
<comment type="subunit">
    <text evidence="1">Homodimer.</text>
</comment>
<comment type="subcellular location">
    <subcellularLocation>
        <location evidence="1">Cytoplasm</location>
    </subcellularLocation>
</comment>
<comment type="miscellaneous">
    <text evidence="1">The thiolation reaction likely consists of two steps: a first activation step by ATP to form an adenylated intermediate of the target base of tRNA, and a second nucleophilic substitution step of the sulfur (S) atom supplied by the hydrosulfide attached to the Fe-S cluster.</text>
</comment>
<comment type="similarity">
    <text evidence="1">Belongs to the TtcA family.</text>
</comment>